<name>HIS2_LISW6</name>
<proteinExistence type="inferred from homology"/>
<organism>
    <name type="scientific">Listeria welshimeri serovar 6b (strain ATCC 35897 / DSM 20650 / CCUG 15529 / CIP 8149 / NCTC 11857 / SLCC 5334 / V8)</name>
    <dbReference type="NCBI Taxonomy" id="386043"/>
    <lineage>
        <taxon>Bacteria</taxon>
        <taxon>Bacillati</taxon>
        <taxon>Bacillota</taxon>
        <taxon>Bacilli</taxon>
        <taxon>Bacillales</taxon>
        <taxon>Listeriaceae</taxon>
        <taxon>Listeria</taxon>
    </lineage>
</organism>
<protein>
    <recommendedName>
        <fullName evidence="1">Phosphoribosyl-ATP pyrophosphatase</fullName>
        <shortName evidence="1">PRA-PH</shortName>
        <ecNumber evidence="1">3.6.1.31</ecNumber>
    </recommendedName>
</protein>
<dbReference type="EC" id="3.6.1.31" evidence="1"/>
<dbReference type="EMBL" id="AM263198">
    <property type="protein sequence ID" value="CAK19945.1"/>
    <property type="molecule type" value="Genomic_DNA"/>
</dbReference>
<dbReference type="RefSeq" id="WP_011701372.1">
    <property type="nucleotide sequence ID" value="NC_008555.1"/>
</dbReference>
<dbReference type="SMR" id="A0AG13"/>
<dbReference type="STRING" id="386043.lwe0527"/>
<dbReference type="GeneID" id="61188415"/>
<dbReference type="KEGG" id="lwe:lwe0527"/>
<dbReference type="eggNOG" id="COG0140">
    <property type="taxonomic scope" value="Bacteria"/>
</dbReference>
<dbReference type="HOGENOM" id="CLU_123337_0_0_9"/>
<dbReference type="OrthoDB" id="9795769at2"/>
<dbReference type="UniPathway" id="UPA00031">
    <property type="reaction ID" value="UER00007"/>
</dbReference>
<dbReference type="Proteomes" id="UP000000779">
    <property type="component" value="Chromosome"/>
</dbReference>
<dbReference type="GO" id="GO:0005737">
    <property type="term" value="C:cytoplasm"/>
    <property type="evidence" value="ECO:0007669"/>
    <property type="project" value="UniProtKB-SubCell"/>
</dbReference>
<dbReference type="GO" id="GO:0005524">
    <property type="term" value="F:ATP binding"/>
    <property type="evidence" value="ECO:0007669"/>
    <property type="project" value="UniProtKB-KW"/>
</dbReference>
<dbReference type="GO" id="GO:0004636">
    <property type="term" value="F:phosphoribosyl-ATP diphosphatase activity"/>
    <property type="evidence" value="ECO:0007669"/>
    <property type="project" value="UniProtKB-UniRule"/>
</dbReference>
<dbReference type="GO" id="GO:0000105">
    <property type="term" value="P:L-histidine biosynthetic process"/>
    <property type="evidence" value="ECO:0007669"/>
    <property type="project" value="UniProtKB-UniRule"/>
</dbReference>
<dbReference type="CDD" id="cd11534">
    <property type="entry name" value="NTP-PPase_HisIE_like"/>
    <property type="match status" value="1"/>
</dbReference>
<dbReference type="Gene3D" id="1.10.287.1080">
    <property type="entry name" value="MazG-like"/>
    <property type="match status" value="1"/>
</dbReference>
<dbReference type="HAMAP" id="MF_01020">
    <property type="entry name" value="HisE"/>
    <property type="match status" value="1"/>
</dbReference>
<dbReference type="InterPro" id="IPR008179">
    <property type="entry name" value="HisE"/>
</dbReference>
<dbReference type="InterPro" id="IPR021130">
    <property type="entry name" value="PRib-ATP_PPHydrolase-like"/>
</dbReference>
<dbReference type="NCBIfam" id="TIGR03188">
    <property type="entry name" value="histidine_hisI"/>
    <property type="match status" value="1"/>
</dbReference>
<dbReference type="PANTHER" id="PTHR42945">
    <property type="entry name" value="HISTIDINE BIOSYNTHESIS BIFUNCTIONAL PROTEIN"/>
    <property type="match status" value="1"/>
</dbReference>
<dbReference type="PANTHER" id="PTHR42945:SF9">
    <property type="entry name" value="HISTIDINE BIOSYNTHESIS BIFUNCTIONAL PROTEIN HISIE"/>
    <property type="match status" value="1"/>
</dbReference>
<dbReference type="Pfam" id="PF01503">
    <property type="entry name" value="PRA-PH"/>
    <property type="match status" value="1"/>
</dbReference>
<dbReference type="SUPFAM" id="SSF101386">
    <property type="entry name" value="all-alpha NTP pyrophosphatases"/>
    <property type="match status" value="1"/>
</dbReference>
<feature type="chain" id="PRO_1000063344" description="Phosphoribosyl-ATP pyrophosphatase">
    <location>
        <begin position="1"/>
        <end position="103"/>
    </location>
</feature>
<feature type="region of interest" description="Disordered" evidence="2">
    <location>
        <begin position="79"/>
        <end position="103"/>
    </location>
</feature>
<feature type="compositionally biased region" description="Basic and acidic residues" evidence="2">
    <location>
        <begin position="83"/>
        <end position="103"/>
    </location>
</feature>
<reference key="1">
    <citation type="journal article" date="2006" name="J. Bacteriol.">
        <title>Whole-genome sequence of Listeria welshimeri reveals common steps in genome reduction with Listeria innocua as compared to Listeria monocytogenes.</title>
        <authorList>
            <person name="Hain T."/>
            <person name="Steinweg C."/>
            <person name="Kuenne C.T."/>
            <person name="Billion A."/>
            <person name="Ghai R."/>
            <person name="Chatterjee S.S."/>
            <person name="Domann E."/>
            <person name="Kaerst U."/>
            <person name="Goesmann A."/>
            <person name="Bekel T."/>
            <person name="Bartels D."/>
            <person name="Kaiser O."/>
            <person name="Meyer F."/>
            <person name="Puehler A."/>
            <person name="Weisshaar B."/>
            <person name="Wehland J."/>
            <person name="Liang C."/>
            <person name="Dandekar T."/>
            <person name="Lampidis R."/>
            <person name="Kreft J."/>
            <person name="Goebel W."/>
            <person name="Chakraborty T."/>
        </authorList>
    </citation>
    <scope>NUCLEOTIDE SEQUENCE [LARGE SCALE GENOMIC DNA]</scope>
    <source>
        <strain>ATCC 35897 / DSM 20650 / CCUG 15529 / CIP 8149 / NCTC 11857 / SLCC 5334 / V8</strain>
    </source>
</reference>
<comment type="catalytic activity">
    <reaction evidence="1">
        <text>1-(5-phospho-beta-D-ribosyl)-ATP + H2O = 1-(5-phospho-beta-D-ribosyl)-5'-AMP + diphosphate + H(+)</text>
        <dbReference type="Rhea" id="RHEA:22828"/>
        <dbReference type="ChEBI" id="CHEBI:15377"/>
        <dbReference type="ChEBI" id="CHEBI:15378"/>
        <dbReference type="ChEBI" id="CHEBI:33019"/>
        <dbReference type="ChEBI" id="CHEBI:59457"/>
        <dbReference type="ChEBI" id="CHEBI:73183"/>
        <dbReference type="EC" id="3.6.1.31"/>
    </reaction>
</comment>
<comment type="pathway">
    <text evidence="1">Amino-acid biosynthesis; L-histidine biosynthesis; L-histidine from 5-phospho-alpha-D-ribose 1-diphosphate: step 2/9.</text>
</comment>
<comment type="subcellular location">
    <subcellularLocation>
        <location evidence="1">Cytoplasm</location>
    </subcellularLocation>
</comment>
<comment type="similarity">
    <text evidence="1">Belongs to the PRA-PH family.</text>
</comment>
<accession>A0AG13</accession>
<gene>
    <name evidence="1" type="primary">hisE</name>
    <name type="ordered locus">lwe0527</name>
</gene>
<evidence type="ECO:0000255" key="1">
    <source>
        <dbReference type="HAMAP-Rule" id="MF_01020"/>
    </source>
</evidence>
<evidence type="ECO:0000256" key="2">
    <source>
        <dbReference type="SAM" id="MobiDB-lite"/>
    </source>
</evidence>
<sequence length="103" mass="11926">MLNDLYEEIKKRKEQPKEGSYTNYLFEKGLDKILKKVGEETTEVIIASKNNNQELVNEVADLTYHLLVLLAEKNVSLSSVQAELERREGKLSTTRDRKEIDEL</sequence>
<keyword id="KW-0028">Amino-acid biosynthesis</keyword>
<keyword id="KW-0067">ATP-binding</keyword>
<keyword id="KW-0963">Cytoplasm</keyword>
<keyword id="KW-0368">Histidine biosynthesis</keyword>
<keyword id="KW-0378">Hydrolase</keyword>
<keyword id="KW-0547">Nucleotide-binding</keyword>